<keyword id="KW-0472">Membrane</keyword>
<keyword id="KW-0592">Phosphate transport</keyword>
<keyword id="KW-1185">Reference proteome</keyword>
<keyword id="KW-0812">Transmembrane</keyword>
<keyword id="KW-1133">Transmembrane helix</keyword>
<keyword id="KW-0813">Transport</keyword>
<comment type="function">
    <text evidence="1">Regulates intra- and extracellular levels of inorganic pyrophosphate (PPi), probably functioning as PPi transporter.</text>
</comment>
<comment type="subcellular location">
    <subcellularLocation>
        <location evidence="1">Membrane</location>
        <topology evidence="1">Multi-pass membrane protein</topology>
    </subcellularLocation>
</comment>
<comment type="similarity">
    <text evidence="3">Belongs to the ANKH family.</text>
</comment>
<dbReference type="EMBL" id="AJ302033">
    <property type="protein sequence ID" value="CAC40980.1"/>
    <property type="molecule type" value="mRNA"/>
</dbReference>
<dbReference type="AGR" id="Xenbase:XB-GENE-1011022"/>
<dbReference type="Xenbase" id="XB-GENE-1011022">
    <property type="gene designation" value="ankh.S"/>
</dbReference>
<dbReference type="Proteomes" id="UP000186698">
    <property type="component" value="Unplaced"/>
</dbReference>
<dbReference type="GO" id="GO:0005886">
    <property type="term" value="C:plasma membrane"/>
    <property type="evidence" value="ECO:0000250"/>
    <property type="project" value="UniProtKB"/>
</dbReference>
<dbReference type="GO" id="GO:0030504">
    <property type="term" value="F:inorganic diphosphate transmembrane transporter activity"/>
    <property type="evidence" value="ECO:0000250"/>
    <property type="project" value="UniProtKB"/>
</dbReference>
<dbReference type="GO" id="GO:0005315">
    <property type="term" value="F:phosphate transmembrane transporter activity"/>
    <property type="evidence" value="ECO:0000318"/>
    <property type="project" value="GO_Central"/>
</dbReference>
<dbReference type="GO" id="GO:0035435">
    <property type="term" value="P:phosphate ion transmembrane transport"/>
    <property type="evidence" value="ECO:0007669"/>
    <property type="project" value="InterPro"/>
</dbReference>
<dbReference type="GO" id="GO:0030500">
    <property type="term" value="P:regulation of bone mineralization"/>
    <property type="evidence" value="ECO:0000250"/>
    <property type="project" value="UniProtKB"/>
</dbReference>
<dbReference type="InterPro" id="IPR009887">
    <property type="entry name" value="ANKH"/>
</dbReference>
<dbReference type="PANTHER" id="PTHR28384">
    <property type="entry name" value="PROGRESSIVE ANKYLOSIS PROTEIN HOMOLOG"/>
    <property type="match status" value="1"/>
</dbReference>
<dbReference type="PANTHER" id="PTHR28384:SF1">
    <property type="entry name" value="PROGRESSIVE ANKYLOSIS PROTEIN HOMOLOG"/>
    <property type="match status" value="1"/>
</dbReference>
<dbReference type="Pfam" id="PF07260">
    <property type="entry name" value="ANKH"/>
    <property type="match status" value="1"/>
</dbReference>
<protein>
    <recommendedName>
        <fullName>Progressive ankylosis protein homolog</fullName>
        <shortName>ANK</shortName>
    </recommendedName>
</protein>
<reference key="1">
    <citation type="journal article" date="2001" name="Nat. Genet.">
        <title>Heterozygous mutations in ANKH, the human ortholog of the mouse progressive ankylosis gene, result in craniometaphyseal dysplasia.</title>
        <authorList>
            <person name="Nuernberg P."/>
            <person name="Thiele H."/>
            <person name="Chandler D."/>
            <person name="Hoehne W."/>
            <person name="Cunningham M.L."/>
            <person name="Ritter H."/>
            <person name="Leschik G."/>
            <person name="Uhlmann K."/>
            <person name="Mischung C."/>
            <person name="Harrop K."/>
            <person name="Goldblatt J."/>
            <person name="Borochowitz Z.U."/>
            <person name="Kotzot D."/>
            <person name="Westermann F."/>
            <person name="Mundlos S."/>
            <person name="Braun H.-S."/>
            <person name="Laing N."/>
            <person name="Tinschert S."/>
        </authorList>
    </citation>
    <scope>NUCLEOTIDE SEQUENCE [MRNA]</scope>
</reference>
<name>ANKH_XENLA</name>
<gene>
    <name type="primary">ankh</name>
</gene>
<organism>
    <name type="scientific">Xenopus laevis</name>
    <name type="common">African clawed frog</name>
    <dbReference type="NCBI Taxonomy" id="8355"/>
    <lineage>
        <taxon>Eukaryota</taxon>
        <taxon>Metazoa</taxon>
        <taxon>Chordata</taxon>
        <taxon>Craniata</taxon>
        <taxon>Vertebrata</taxon>
        <taxon>Euteleostomi</taxon>
        <taxon>Amphibia</taxon>
        <taxon>Batrachia</taxon>
        <taxon>Anura</taxon>
        <taxon>Pipoidea</taxon>
        <taxon>Pipidae</taxon>
        <taxon>Xenopodinae</taxon>
        <taxon>Xenopus</taxon>
        <taxon>Xenopus</taxon>
    </lineage>
</organism>
<sequence length="492" mass="53953">MVKLPSLTPYWPLIRFLVPLGITNIAIDFGEQALNRGIAAVKEDAIEMLASYGLAYSLMKFFTGPMSDFKNVGLVFVNSKRDRMKAVLCMVVAGIIAAVFHTLIAYSDLGYYIINKLHHVDESVGGKTRKAFLYLAAVPFMDAMAWTHAGILLKHKYSFLVGCASISDVIAQVVFVAILLHSHLECREPLLIPILSLYIGALVRCTTLCLGYYKNIHDKIPESSGPEIGGDATIKKMLSFWWPLALILATQRISRPIVNLFVSRDLGGSTAATEAVAILTATYPVGHMPYGWLTEIRAVYPAFDKSNPGSKLANSSNPVSKTHIKNXTFACMALSLTLCFVMFWTPNVSEKILVDIIGVDFAFAELCVIPLRIFSFFPVPVTVRAHLTGWLMTLKKTFVLAPSSILRIIVLISSLIVLPYLGVHGATLGVGSLLAGFVGESTMVAIASLYVYRKQKKKSETENAVEGEDSAMTDLPHNEELTDIVEIKEDGE</sequence>
<proteinExistence type="evidence at transcript level"/>
<accession>P58367</accession>
<evidence type="ECO:0000250" key="1"/>
<evidence type="ECO:0000255" key="2"/>
<evidence type="ECO:0000305" key="3"/>
<feature type="chain" id="PRO_0000137470" description="Progressive ankylosis protein homolog">
    <location>
        <begin position="1"/>
        <end position="492"/>
    </location>
</feature>
<feature type="topological domain" description="Cytoplasmic" evidence="2">
    <location>
        <begin position="1"/>
        <end position="85"/>
    </location>
</feature>
<feature type="transmembrane region" description="Helical" evidence="2">
    <location>
        <begin position="86"/>
        <end position="106"/>
    </location>
</feature>
<feature type="topological domain" description="Extracellular" evidence="2">
    <location>
        <begin position="107"/>
        <end position="131"/>
    </location>
</feature>
<feature type="transmembrane region" description="Helical" evidence="2">
    <location>
        <begin position="132"/>
        <end position="152"/>
    </location>
</feature>
<feature type="topological domain" description="Cytoplasmic" evidence="2">
    <location>
        <begin position="153"/>
        <end position="158"/>
    </location>
</feature>
<feature type="transmembrane region" description="Helical" evidence="2">
    <location>
        <begin position="159"/>
        <end position="179"/>
    </location>
</feature>
<feature type="topological domain" description="Extracellular" evidence="2">
    <location>
        <begin position="180"/>
        <end position="189"/>
    </location>
</feature>
<feature type="transmembrane region" description="Helical" evidence="2">
    <location>
        <begin position="190"/>
        <end position="210"/>
    </location>
</feature>
<feature type="topological domain" description="Cytoplasmic" evidence="2">
    <location>
        <begin position="211"/>
        <end position="327"/>
    </location>
</feature>
<feature type="transmembrane region" description="Helical" evidence="2">
    <location>
        <begin position="328"/>
        <end position="348"/>
    </location>
</feature>
<feature type="topological domain" description="Extracellular" evidence="2">
    <location>
        <begin position="349"/>
        <end position="360"/>
    </location>
</feature>
<feature type="transmembrane region" description="Helical" evidence="2">
    <location>
        <begin position="361"/>
        <end position="381"/>
    </location>
</feature>
<feature type="topological domain" description="Cytoplasmic" evidence="2">
    <location>
        <begin position="382"/>
        <end position="403"/>
    </location>
</feature>
<feature type="transmembrane region" description="Helical" evidence="2">
    <location>
        <begin position="404"/>
        <end position="426"/>
    </location>
</feature>
<feature type="topological domain" description="Extracellular" evidence="2">
    <location>
        <begin position="427"/>
        <end position="429"/>
    </location>
</feature>
<feature type="transmembrane region" description="Helical" evidence="2">
    <location>
        <begin position="430"/>
        <end position="452"/>
    </location>
</feature>
<feature type="topological domain" description="Cytoplasmic" evidence="2">
    <location>
        <begin position="453"/>
        <end position="492"/>
    </location>
</feature>